<evidence type="ECO:0000255" key="1">
    <source>
        <dbReference type="HAMAP-Rule" id="MF_01367"/>
    </source>
</evidence>
<evidence type="ECO:0000305" key="2"/>
<dbReference type="EMBL" id="CP001205">
    <property type="protein sequence ID" value="ACK74522.1"/>
    <property type="molecule type" value="Genomic_DNA"/>
</dbReference>
<dbReference type="RefSeq" id="WP_002655934.1">
    <property type="nucleotide sequence ID" value="NC_011728.1"/>
</dbReference>
<dbReference type="SMR" id="B7J253"/>
<dbReference type="GeneID" id="63641263"/>
<dbReference type="KEGG" id="bbz:BbuZS7_0499"/>
<dbReference type="HOGENOM" id="CLU_095071_2_1_12"/>
<dbReference type="Proteomes" id="UP000006901">
    <property type="component" value="Chromosome"/>
</dbReference>
<dbReference type="GO" id="GO:0022625">
    <property type="term" value="C:cytosolic large ribosomal subunit"/>
    <property type="evidence" value="ECO:0007669"/>
    <property type="project" value="TreeGrafter"/>
</dbReference>
<dbReference type="GO" id="GO:0070180">
    <property type="term" value="F:large ribosomal subunit rRNA binding"/>
    <property type="evidence" value="ECO:0007669"/>
    <property type="project" value="TreeGrafter"/>
</dbReference>
<dbReference type="GO" id="GO:0003735">
    <property type="term" value="F:structural constituent of ribosome"/>
    <property type="evidence" value="ECO:0007669"/>
    <property type="project" value="InterPro"/>
</dbReference>
<dbReference type="GO" id="GO:0006412">
    <property type="term" value="P:translation"/>
    <property type="evidence" value="ECO:0007669"/>
    <property type="project" value="UniProtKB-UniRule"/>
</dbReference>
<dbReference type="CDD" id="cd00337">
    <property type="entry name" value="Ribosomal_uL14"/>
    <property type="match status" value="1"/>
</dbReference>
<dbReference type="FunFam" id="2.40.150.20:FF:000001">
    <property type="entry name" value="50S ribosomal protein L14"/>
    <property type="match status" value="1"/>
</dbReference>
<dbReference type="Gene3D" id="2.40.150.20">
    <property type="entry name" value="Ribosomal protein L14"/>
    <property type="match status" value="1"/>
</dbReference>
<dbReference type="HAMAP" id="MF_01367">
    <property type="entry name" value="Ribosomal_uL14"/>
    <property type="match status" value="1"/>
</dbReference>
<dbReference type="InterPro" id="IPR000218">
    <property type="entry name" value="Ribosomal_uL14"/>
</dbReference>
<dbReference type="InterPro" id="IPR005745">
    <property type="entry name" value="Ribosomal_uL14_bac-type"/>
</dbReference>
<dbReference type="InterPro" id="IPR019972">
    <property type="entry name" value="Ribosomal_uL14_CS"/>
</dbReference>
<dbReference type="InterPro" id="IPR036853">
    <property type="entry name" value="Ribosomal_uL14_sf"/>
</dbReference>
<dbReference type="NCBIfam" id="TIGR01067">
    <property type="entry name" value="rplN_bact"/>
    <property type="match status" value="1"/>
</dbReference>
<dbReference type="PANTHER" id="PTHR11761">
    <property type="entry name" value="50S/60S RIBOSOMAL PROTEIN L14/L23"/>
    <property type="match status" value="1"/>
</dbReference>
<dbReference type="PANTHER" id="PTHR11761:SF3">
    <property type="entry name" value="LARGE RIBOSOMAL SUBUNIT PROTEIN UL14M"/>
    <property type="match status" value="1"/>
</dbReference>
<dbReference type="Pfam" id="PF00238">
    <property type="entry name" value="Ribosomal_L14"/>
    <property type="match status" value="1"/>
</dbReference>
<dbReference type="SMART" id="SM01374">
    <property type="entry name" value="Ribosomal_L14"/>
    <property type="match status" value="1"/>
</dbReference>
<dbReference type="SUPFAM" id="SSF50193">
    <property type="entry name" value="Ribosomal protein L14"/>
    <property type="match status" value="1"/>
</dbReference>
<dbReference type="PROSITE" id="PS00049">
    <property type="entry name" value="RIBOSOMAL_L14"/>
    <property type="match status" value="1"/>
</dbReference>
<organism>
    <name type="scientific">Borreliella burgdorferi (strain ZS7)</name>
    <name type="common">Borrelia burgdorferi</name>
    <dbReference type="NCBI Taxonomy" id="445985"/>
    <lineage>
        <taxon>Bacteria</taxon>
        <taxon>Pseudomonadati</taxon>
        <taxon>Spirochaetota</taxon>
        <taxon>Spirochaetia</taxon>
        <taxon>Spirochaetales</taxon>
        <taxon>Borreliaceae</taxon>
        <taxon>Borreliella</taxon>
    </lineage>
</organism>
<feature type="chain" id="PRO_1000144227" description="Large ribosomal subunit protein uL14">
    <location>
        <begin position="1"/>
        <end position="122"/>
    </location>
</feature>
<sequence length="122" mass="13418">MIQMQTYLTIADNTGGKVAQCIKVLGGSKRRYAKIGDIITIVVKQAIPNSSVKKGDVHKAVIVRTSKEVRRKNGTYVRFDDNACVILDANLSPRGKRVFGPVARELRDANFMKVVSLASEVI</sequence>
<gene>
    <name evidence="1" type="primary">rplN</name>
    <name type="ordered locus">BbuZS7_0499</name>
</gene>
<accession>B7J253</accession>
<reference key="1">
    <citation type="journal article" date="2011" name="J. Bacteriol.">
        <title>Whole-genome sequences of thirteen isolates of Borrelia burgdorferi.</title>
        <authorList>
            <person name="Schutzer S.E."/>
            <person name="Fraser-Liggett C.M."/>
            <person name="Casjens S.R."/>
            <person name="Qiu W.G."/>
            <person name="Dunn J.J."/>
            <person name="Mongodin E.F."/>
            <person name="Luft B.J."/>
        </authorList>
    </citation>
    <scope>NUCLEOTIDE SEQUENCE [LARGE SCALE GENOMIC DNA]</scope>
    <source>
        <strain>ZS7</strain>
    </source>
</reference>
<name>RL14_BORBZ</name>
<keyword id="KW-0687">Ribonucleoprotein</keyword>
<keyword id="KW-0689">Ribosomal protein</keyword>
<keyword id="KW-0694">RNA-binding</keyword>
<keyword id="KW-0699">rRNA-binding</keyword>
<protein>
    <recommendedName>
        <fullName evidence="1">Large ribosomal subunit protein uL14</fullName>
    </recommendedName>
    <alternativeName>
        <fullName evidence="2">50S ribosomal protein L14</fullName>
    </alternativeName>
</protein>
<proteinExistence type="inferred from homology"/>
<comment type="function">
    <text evidence="1">Binds to 23S rRNA. Forms part of two intersubunit bridges in the 70S ribosome.</text>
</comment>
<comment type="subunit">
    <text evidence="1">Part of the 50S ribosomal subunit. Forms a cluster with proteins L3 and L19. In the 70S ribosome, L14 and L19 interact and together make contacts with the 16S rRNA in bridges B5 and B8.</text>
</comment>
<comment type="similarity">
    <text evidence="1">Belongs to the universal ribosomal protein uL14 family.</text>
</comment>